<keyword id="KW-0067">ATP-binding</keyword>
<keyword id="KW-0325">Glycoprotein</keyword>
<keyword id="KW-0472">Membrane</keyword>
<keyword id="KW-0547">Nucleotide-binding</keyword>
<keyword id="KW-0677">Repeat</keyword>
<keyword id="KW-0812">Transmembrane</keyword>
<keyword id="KW-1133">Transmembrane helix</keyword>
<keyword id="KW-0813">Transport</keyword>
<protein>
    <recommendedName>
        <fullName evidence="7">ABC transporter 1</fullName>
    </recommendedName>
    <alternativeName>
        <fullName evidence="7">Siderophore biosynthesis cluster protein ABC1</fullName>
    </alternativeName>
</protein>
<proteinExistence type="evidence at transcript level"/>
<gene>
    <name evidence="7" type="primary">ABC1</name>
</gene>
<accession>B2KWH4</accession>
<comment type="function">
    <text evidence="6">ABC transporter; part of the gene cluster that mediates the biosynthesis of hydroxamate-containing siderophores that play a critical role in virulence via intracellular iron acquisition during macrophage infection (PubMed:18404210). Probably involved in the excretion of the extracellular siderophores (PubMed:18404210).</text>
</comment>
<comment type="subcellular location">
    <subcellularLocation>
        <location evidence="1">Membrane</location>
        <topology evidence="1">Multi-pass membrane protein</topology>
    </subcellularLocation>
</comment>
<comment type="induction">
    <text evidence="6">Expression is induced during iron deprivation (PubMed:18404210).</text>
</comment>
<comment type="similarity">
    <text evidence="8">Belongs to the ABC transporter superfamily. ABCB family. Multidrug resistance exporter (TC 3.A.1.201) subfamily.</text>
</comment>
<dbReference type="EMBL" id="EU253969">
    <property type="protein sequence ID" value="ACC64447.1"/>
    <property type="molecule type" value="Genomic_DNA"/>
</dbReference>
<dbReference type="SMR" id="B2KWH4"/>
<dbReference type="GlyCosmos" id="B2KWH4">
    <property type="glycosylation" value="6 sites, No reported glycans"/>
</dbReference>
<dbReference type="GO" id="GO:0005743">
    <property type="term" value="C:mitochondrial inner membrane"/>
    <property type="evidence" value="ECO:0007669"/>
    <property type="project" value="TreeGrafter"/>
</dbReference>
<dbReference type="GO" id="GO:0015421">
    <property type="term" value="F:ABC-type oligopeptide transporter activity"/>
    <property type="evidence" value="ECO:0007669"/>
    <property type="project" value="TreeGrafter"/>
</dbReference>
<dbReference type="GO" id="GO:0005524">
    <property type="term" value="F:ATP binding"/>
    <property type="evidence" value="ECO:0007669"/>
    <property type="project" value="UniProtKB-KW"/>
</dbReference>
<dbReference type="GO" id="GO:0016887">
    <property type="term" value="F:ATP hydrolysis activity"/>
    <property type="evidence" value="ECO:0007669"/>
    <property type="project" value="InterPro"/>
</dbReference>
<dbReference type="GO" id="GO:0090374">
    <property type="term" value="P:oligopeptide export from mitochondrion"/>
    <property type="evidence" value="ECO:0007669"/>
    <property type="project" value="TreeGrafter"/>
</dbReference>
<dbReference type="CDD" id="cd18577">
    <property type="entry name" value="ABC_6TM_Pgp_ABCB1_D1_like"/>
    <property type="match status" value="1"/>
</dbReference>
<dbReference type="CDD" id="cd18578">
    <property type="entry name" value="ABC_6TM_Pgp_ABCB1_D2_like"/>
    <property type="match status" value="1"/>
</dbReference>
<dbReference type="FunFam" id="1.20.1560.10:FF:000057">
    <property type="entry name" value="ABC multidrug transporter SitT"/>
    <property type="match status" value="1"/>
</dbReference>
<dbReference type="FunFam" id="3.40.50.300:FF:000913">
    <property type="entry name" value="ABC multidrug transporter SitT"/>
    <property type="match status" value="1"/>
</dbReference>
<dbReference type="Gene3D" id="1.20.1560.10">
    <property type="entry name" value="ABC transporter type 1, transmembrane domain"/>
    <property type="match status" value="1"/>
</dbReference>
<dbReference type="Gene3D" id="3.40.50.300">
    <property type="entry name" value="P-loop containing nucleotide triphosphate hydrolases"/>
    <property type="match status" value="2"/>
</dbReference>
<dbReference type="InterPro" id="IPR003593">
    <property type="entry name" value="AAA+_ATPase"/>
</dbReference>
<dbReference type="InterPro" id="IPR011527">
    <property type="entry name" value="ABC1_TM_dom"/>
</dbReference>
<dbReference type="InterPro" id="IPR036640">
    <property type="entry name" value="ABC1_TM_sf"/>
</dbReference>
<dbReference type="InterPro" id="IPR003439">
    <property type="entry name" value="ABC_transporter-like_ATP-bd"/>
</dbReference>
<dbReference type="InterPro" id="IPR017871">
    <property type="entry name" value="ABC_transporter-like_CS"/>
</dbReference>
<dbReference type="InterPro" id="IPR027417">
    <property type="entry name" value="P-loop_NTPase"/>
</dbReference>
<dbReference type="InterPro" id="IPR039421">
    <property type="entry name" value="Type_1_exporter"/>
</dbReference>
<dbReference type="PANTHER" id="PTHR43394:SF11">
    <property type="entry name" value="ATP-BINDING CASSETTE TRANSPORTER"/>
    <property type="match status" value="1"/>
</dbReference>
<dbReference type="PANTHER" id="PTHR43394">
    <property type="entry name" value="ATP-DEPENDENT PERMEASE MDL1, MITOCHONDRIAL"/>
    <property type="match status" value="1"/>
</dbReference>
<dbReference type="Pfam" id="PF00664">
    <property type="entry name" value="ABC_membrane"/>
    <property type="match status" value="2"/>
</dbReference>
<dbReference type="Pfam" id="PF00005">
    <property type="entry name" value="ABC_tran"/>
    <property type="match status" value="2"/>
</dbReference>
<dbReference type="SMART" id="SM00382">
    <property type="entry name" value="AAA"/>
    <property type="match status" value="2"/>
</dbReference>
<dbReference type="SUPFAM" id="SSF90123">
    <property type="entry name" value="ABC transporter transmembrane region"/>
    <property type="match status" value="2"/>
</dbReference>
<dbReference type="SUPFAM" id="SSF52540">
    <property type="entry name" value="P-loop containing nucleoside triphosphate hydrolases"/>
    <property type="match status" value="2"/>
</dbReference>
<dbReference type="PROSITE" id="PS50929">
    <property type="entry name" value="ABC_TM1F"/>
    <property type="match status" value="2"/>
</dbReference>
<dbReference type="PROSITE" id="PS00211">
    <property type="entry name" value="ABC_TRANSPORTER_1"/>
    <property type="match status" value="2"/>
</dbReference>
<dbReference type="PROSITE" id="PS50893">
    <property type="entry name" value="ABC_TRANSPORTER_2"/>
    <property type="match status" value="2"/>
</dbReference>
<feature type="chain" id="PRO_0000444420" description="ABC transporter 1">
    <location>
        <begin position="1"/>
        <end position="1327"/>
    </location>
</feature>
<feature type="transmembrane region" description="Helical" evidence="1 3">
    <location>
        <begin position="47"/>
        <end position="67"/>
    </location>
</feature>
<feature type="transmembrane region" description="Helical" evidence="1 3">
    <location>
        <begin position="100"/>
        <end position="120"/>
    </location>
</feature>
<feature type="transmembrane region" description="Helical" evidence="1 3">
    <location>
        <begin position="170"/>
        <end position="190"/>
    </location>
</feature>
<feature type="transmembrane region" description="Helical" evidence="1 3">
    <location>
        <begin position="195"/>
        <end position="215"/>
    </location>
</feature>
<feature type="transmembrane region" description="Helical" evidence="1 3">
    <location>
        <begin position="228"/>
        <end position="248"/>
    </location>
</feature>
<feature type="transmembrane region" description="Helical" evidence="1 3">
    <location>
        <begin position="276"/>
        <end position="296"/>
    </location>
</feature>
<feature type="transmembrane region" description="Helical" evidence="1 3">
    <location>
        <begin position="743"/>
        <end position="763"/>
    </location>
</feature>
<feature type="transmembrane region" description="Helical" evidence="1 3">
    <location>
        <begin position="785"/>
        <end position="805"/>
    </location>
</feature>
<feature type="transmembrane region" description="Helical" evidence="1 3">
    <location>
        <begin position="859"/>
        <end position="881"/>
    </location>
</feature>
<feature type="transmembrane region" description="Helical" evidence="1 3">
    <location>
        <begin position="888"/>
        <end position="910"/>
    </location>
</feature>
<feature type="transmembrane region" description="Helical" evidence="1 3">
    <location>
        <begin position="971"/>
        <end position="991"/>
    </location>
</feature>
<feature type="transmembrane region" description="Helical" evidence="1 3">
    <location>
        <begin position="1005"/>
        <end position="1025"/>
    </location>
</feature>
<feature type="domain" description="ABC transmembrane type-1 1" evidence="3">
    <location>
        <begin position="47"/>
        <end position="326"/>
    </location>
</feature>
<feature type="domain" description="ABC transporter 1" evidence="2">
    <location>
        <begin position="386"/>
        <end position="663"/>
    </location>
</feature>
<feature type="domain" description="ABC transmembrane type-1 2" evidence="3">
    <location>
        <begin position="743"/>
        <end position="1031"/>
    </location>
</feature>
<feature type="domain" description="ABC transporter 2" evidence="2">
    <location>
        <begin position="1084"/>
        <end position="1323"/>
    </location>
</feature>
<feature type="region of interest" description="Disordered" evidence="5">
    <location>
        <begin position="1054"/>
        <end position="1081"/>
    </location>
</feature>
<feature type="binding site" evidence="2">
    <location>
        <begin position="421"/>
        <end position="428"/>
    </location>
    <ligand>
        <name>ATP</name>
        <dbReference type="ChEBI" id="CHEBI:30616"/>
    </ligand>
</feature>
<feature type="binding site" evidence="2">
    <location>
        <begin position="1119"/>
        <end position="1126"/>
    </location>
    <ligand>
        <name>ATP</name>
        <dbReference type="ChEBI" id="CHEBI:30616"/>
    </ligand>
</feature>
<feature type="glycosylation site" description="N-linked (GlcNAc...) asparagine" evidence="4">
    <location>
        <position position="381"/>
    </location>
</feature>
<feature type="glycosylation site" description="N-linked (GlcNAc...) asparagine" evidence="4">
    <location>
        <position position="390"/>
    </location>
</feature>
<feature type="glycosylation site" description="N-linked (GlcNAc...) asparagine" evidence="4">
    <location>
        <position position="406"/>
    </location>
</feature>
<feature type="glycosylation site" description="N-linked (GlcNAc...) asparagine" evidence="4">
    <location>
        <position position="463"/>
    </location>
</feature>
<feature type="glycosylation site" description="N-linked (GlcNAc...) asparagine" evidence="4">
    <location>
        <position position="674"/>
    </location>
</feature>
<feature type="glycosylation site" description="N-linked (GlcNAc...) asparagine" evidence="4">
    <location>
        <position position="1050"/>
    </location>
</feature>
<sequence length="1327" mass="142704">MTEASEDLAAGESKTAKSRRIIRRATRYVRLLVYAEPTTVDLILLTLGILAAIASGVPFPLMGIIFGQLVDNLNSASCNTDSQRGSAYQSEVNDKALKVVYVGIAYFVLVYIYIASWNLFGERLAQRLRERYFKSLLRQDASFFDNMPAGEAASRLTSDITTIQQGTSEKVGIVLNSVSFFITAYIIAFVKDAKLGGELVSLTPAYLLMSLVGGYYTQKYASAMLKNVAGASSVAMEALSNATIVHAFSANAQLESKFAGLLGNAKVAGIRKAISVAVQSGLLYFIAFSANGLAFWQGSKTIADAVASGNPGSSVGTTYTVIFLLVDGEIFNIKVSSIRQVAPFVQVFDAAGVTFESLEADINREPKIDGTVEGTENSLRNVSGNIELNNVSFAFPSRPDKPVLDNVSMSCAAGQHTAIVGLSGSGKSTVAGLIARLYDPTNGEVSFAGQNIKDLNVRSLRSNLSLVQQEPSLLDRSILENIALGLINSPSHSHLSPALLGGKLSDIATAVRNGRDLMEEAEIHGQETAEIIDMVRNAADLADASAFIGRLKDGYGTLVGSAGSLISGGQKQRISIARSLVKKPKLLILDEATAALDSTSQQRVQSAIEKVMSGRTLISIAHRLSTIKNADNIIVMNQGKVVEQGTHSELISSDGAYAGLVRLQNLNIRPEEENVSSESLATKDSYDNIIEKAAEASLDERRSLETSARKGEDNSDGINAKRSLSSTLKAVGPMLRPHMLFLFLALTSAFVVGGTYSASAVVFGNTIGGLSPCKTADSIRSAGKFYGLMFFILAIIEFFANLGSWSAFGWVAEKITYKVRVLSFRALMEQDLQWHQSDGRSPTVLLSIITQDGNALSGLTGSVVGTIIAILVNLVVAIALSHVIAWKIALVCLAVVPLMLGAGVMRVITMTQFQERHARAFEKSLGITVEAVNSIKTISALSLEHEILRTYRRSLKGPTMEIAQQSAYANLWLAISYGVSNFLYALAYWWGAKRIIAGDYSQTQFFIVLMALLVSAQLWGQMFTLAPDVSRAFTALARILNLLDLGSTKNLSGPCQHLKPGNDLEANAEPREKRPDQSQGGISVSLNNVKFSYPARQDVLVLDGLDIHIKPGQFAALVGPSGAGKSTIVSLIERLYTPTSGSVHIDGQDISAREGVSFRDNIAFVPQDSVLFEGTIRFNVALGARPGHKPTDAEIEEACRLANIHDTIVNLPEGYNTNCGPSGNQLSGGQKQRLAIARALVRKPQLLLLDESTSALDAESEQLLQAGLEKATKGMTVIAIAHRLYTIQKADVIFLIEDGRCTDKGTHAELVERSESYKINALHQAFE</sequence>
<name>ABC1_AJECA</name>
<organism>
    <name type="scientific">Ajellomyces capsulatus</name>
    <name type="common">Darling's disease fungus</name>
    <name type="synonym">Histoplasma capsulatum</name>
    <dbReference type="NCBI Taxonomy" id="5037"/>
    <lineage>
        <taxon>Eukaryota</taxon>
        <taxon>Fungi</taxon>
        <taxon>Dikarya</taxon>
        <taxon>Ascomycota</taxon>
        <taxon>Pezizomycotina</taxon>
        <taxon>Eurotiomycetes</taxon>
        <taxon>Eurotiomycetidae</taxon>
        <taxon>Onygenales</taxon>
        <taxon>Ajellomycetaceae</taxon>
        <taxon>Histoplasma</taxon>
    </lineage>
</organism>
<evidence type="ECO:0000255" key="1"/>
<evidence type="ECO:0000255" key="2">
    <source>
        <dbReference type="PROSITE-ProRule" id="PRU00434"/>
    </source>
</evidence>
<evidence type="ECO:0000255" key="3">
    <source>
        <dbReference type="PROSITE-ProRule" id="PRU00441"/>
    </source>
</evidence>
<evidence type="ECO:0000255" key="4">
    <source>
        <dbReference type="PROSITE-ProRule" id="PRU00498"/>
    </source>
</evidence>
<evidence type="ECO:0000256" key="5">
    <source>
        <dbReference type="SAM" id="MobiDB-lite"/>
    </source>
</evidence>
<evidence type="ECO:0000269" key="6">
    <source>
    </source>
</evidence>
<evidence type="ECO:0000303" key="7">
    <source>
    </source>
</evidence>
<evidence type="ECO:0000305" key="8"/>
<reference key="1">
    <citation type="journal article" date="2008" name="PLoS Pathog.">
        <title>Histoplasma requires SID1, a member of an iron-regulated siderophore gene cluster, for host colonization.</title>
        <authorList>
            <person name="Hwang L.H."/>
            <person name="Mayfield J.A."/>
            <person name="Rine J."/>
            <person name="Sil A."/>
        </authorList>
    </citation>
    <scope>NUCLEOTIDE SEQUENCE [GENOMIC DNA]</scope>
    <scope>FUNCTION</scope>
    <scope>INDUCTION</scope>
    <source>
        <strain>ATCC 26032 / G217B</strain>
    </source>
</reference>
<reference key="2">
    <citation type="journal article" date="2008" name="Biochemistry">
        <title>Sre1, an iron-modulated GATA DNA-binding protein of iron-uptake genes in the fungal pathogen Histoplasma capsulatum.</title>
        <authorList>
            <person name="Chao L.Y."/>
            <person name="Marletta M.A."/>
            <person name="Rine J."/>
        </authorList>
    </citation>
    <scope>INDUCTION</scope>
    <source>
        <strain>ATCC 26032 / G217B</strain>
    </source>
</reference>